<reference key="1">
    <citation type="journal article" date="2011" name="J. Bacteriol.">
        <title>Complete genome sequence of the plant growth-promoting endophyte Burkholderia phytofirmans strain PsJN.</title>
        <authorList>
            <person name="Weilharter A."/>
            <person name="Mitter B."/>
            <person name="Shin M.V."/>
            <person name="Chain P.S."/>
            <person name="Nowak J."/>
            <person name="Sessitsch A."/>
        </authorList>
    </citation>
    <scope>NUCLEOTIDE SEQUENCE [LARGE SCALE GENOMIC DNA]</scope>
    <source>
        <strain>DSM 17436 / LMG 22146 / PsJN</strain>
    </source>
</reference>
<organism>
    <name type="scientific">Paraburkholderia phytofirmans (strain DSM 17436 / LMG 22146 / PsJN)</name>
    <name type="common">Burkholderia phytofirmans</name>
    <dbReference type="NCBI Taxonomy" id="398527"/>
    <lineage>
        <taxon>Bacteria</taxon>
        <taxon>Pseudomonadati</taxon>
        <taxon>Pseudomonadota</taxon>
        <taxon>Betaproteobacteria</taxon>
        <taxon>Burkholderiales</taxon>
        <taxon>Burkholderiaceae</taxon>
        <taxon>Paraburkholderia</taxon>
    </lineage>
</organism>
<gene>
    <name evidence="1" type="primary">rplO</name>
    <name type="ordered locus">Bphyt_3625</name>
</gene>
<accession>B2T732</accession>
<comment type="function">
    <text evidence="1">Binds to the 23S rRNA.</text>
</comment>
<comment type="subunit">
    <text evidence="1">Part of the 50S ribosomal subunit.</text>
</comment>
<comment type="similarity">
    <text evidence="1">Belongs to the universal ribosomal protein uL15 family.</text>
</comment>
<proteinExistence type="inferred from homology"/>
<feature type="chain" id="PRO_1000142787" description="Large ribosomal subunit protein uL15">
    <location>
        <begin position="1"/>
        <end position="144"/>
    </location>
</feature>
<feature type="region of interest" description="Disordered" evidence="2">
    <location>
        <begin position="1"/>
        <end position="57"/>
    </location>
</feature>
<feature type="compositionally biased region" description="Gly residues" evidence="2">
    <location>
        <begin position="21"/>
        <end position="31"/>
    </location>
</feature>
<name>RL15_PARPJ</name>
<protein>
    <recommendedName>
        <fullName evidence="1">Large ribosomal subunit protein uL15</fullName>
    </recommendedName>
    <alternativeName>
        <fullName evidence="3">50S ribosomal protein L15</fullName>
    </alternativeName>
</protein>
<evidence type="ECO:0000255" key="1">
    <source>
        <dbReference type="HAMAP-Rule" id="MF_01341"/>
    </source>
</evidence>
<evidence type="ECO:0000256" key="2">
    <source>
        <dbReference type="SAM" id="MobiDB-lite"/>
    </source>
</evidence>
<evidence type="ECO:0000305" key="3"/>
<sequence length="144" mass="15230">MELNNLKPAEGSKHAKRRVGRGIGSGLGKTAGRGHKGQKSRSGGFHKVGFEGGQMPLQRRLPKRGFTSLTKEFVGEVRLSDLEKLPVDEIDLLALKQAGLIGEMITSAKIIKTGELKRKVVVKGLGATKGARAAIEAAGGSFAE</sequence>
<dbReference type="EMBL" id="CP001052">
    <property type="protein sequence ID" value="ACD18015.1"/>
    <property type="molecule type" value="Genomic_DNA"/>
</dbReference>
<dbReference type="RefSeq" id="WP_012434567.1">
    <property type="nucleotide sequence ID" value="NC_010681.1"/>
</dbReference>
<dbReference type="SMR" id="B2T732"/>
<dbReference type="STRING" id="398527.Bphyt_3625"/>
<dbReference type="GeneID" id="97311011"/>
<dbReference type="KEGG" id="bpy:Bphyt_3625"/>
<dbReference type="eggNOG" id="COG0200">
    <property type="taxonomic scope" value="Bacteria"/>
</dbReference>
<dbReference type="HOGENOM" id="CLU_055188_4_2_4"/>
<dbReference type="OrthoDB" id="9810293at2"/>
<dbReference type="Proteomes" id="UP000001739">
    <property type="component" value="Chromosome 1"/>
</dbReference>
<dbReference type="GO" id="GO:0022625">
    <property type="term" value="C:cytosolic large ribosomal subunit"/>
    <property type="evidence" value="ECO:0007669"/>
    <property type="project" value="TreeGrafter"/>
</dbReference>
<dbReference type="GO" id="GO:0019843">
    <property type="term" value="F:rRNA binding"/>
    <property type="evidence" value="ECO:0007669"/>
    <property type="project" value="UniProtKB-UniRule"/>
</dbReference>
<dbReference type="GO" id="GO:0003735">
    <property type="term" value="F:structural constituent of ribosome"/>
    <property type="evidence" value="ECO:0007669"/>
    <property type="project" value="InterPro"/>
</dbReference>
<dbReference type="GO" id="GO:0006412">
    <property type="term" value="P:translation"/>
    <property type="evidence" value="ECO:0007669"/>
    <property type="project" value="UniProtKB-UniRule"/>
</dbReference>
<dbReference type="Gene3D" id="3.100.10.10">
    <property type="match status" value="1"/>
</dbReference>
<dbReference type="HAMAP" id="MF_01341">
    <property type="entry name" value="Ribosomal_uL15"/>
    <property type="match status" value="1"/>
</dbReference>
<dbReference type="InterPro" id="IPR030878">
    <property type="entry name" value="Ribosomal_uL15"/>
</dbReference>
<dbReference type="InterPro" id="IPR021131">
    <property type="entry name" value="Ribosomal_uL15/eL18"/>
</dbReference>
<dbReference type="InterPro" id="IPR036227">
    <property type="entry name" value="Ribosomal_uL15/eL18_sf"/>
</dbReference>
<dbReference type="InterPro" id="IPR005749">
    <property type="entry name" value="Ribosomal_uL15_bac-type"/>
</dbReference>
<dbReference type="NCBIfam" id="TIGR01071">
    <property type="entry name" value="rplO_bact"/>
    <property type="match status" value="1"/>
</dbReference>
<dbReference type="PANTHER" id="PTHR12934">
    <property type="entry name" value="50S RIBOSOMAL PROTEIN L15"/>
    <property type="match status" value="1"/>
</dbReference>
<dbReference type="PANTHER" id="PTHR12934:SF11">
    <property type="entry name" value="LARGE RIBOSOMAL SUBUNIT PROTEIN UL15M"/>
    <property type="match status" value="1"/>
</dbReference>
<dbReference type="Pfam" id="PF00828">
    <property type="entry name" value="Ribosomal_L27A"/>
    <property type="match status" value="1"/>
</dbReference>
<dbReference type="SUPFAM" id="SSF52080">
    <property type="entry name" value="Ribosomal proteins L15p and L18e"/>
    <property type="match status" value="1"/>
</dbReference>
<keyword id="KW-0687">Ribonucleoprotein</keyword>
<keyword id="KW-0689">Ribosomal protein</keyword>
<keyword id="KW-0694">RNA-binding</keyword>
<keyword id="KW-0699">rRNA-binding</keyword>